<feature type="chain" id="PRO_0000382167" description="ATP synthase subunit delta 1">
    <location>
        <begin position="1"/>
        <end position="177"/>
    </location>
</feature>
<accession>A7N0Y4</accession>
<comment type="function">
    <text evidence="1">F(1)F(0) ATP synthase produces ATP from ADP in the presence of a proton or sodium gradient. F-type ATPases consist of two structural domains, F(1) containing the extramembraneous catalytic core and F(0) containing the membrane proton channel, linked together by a central stalk and a peripheral stalk. During catalysis, ATP synthesis in the catalytic domain of F(1) is coupled via a rotary mechanism of the central stalk subunits to proton translocation.</text>
</comment>
<comment type="function">
    <text evidence="1">This protein is part of the stalk that links CF(0) to CF(1). It either transmits conformational changes from CF(0) to CF(1) or is implicated in proton conduction.</text>
</comment>
<comment type="subunit">
    <text evidence="1">F-type ATPases have 2 components, F(1) - the catalytic core - and F(0) - the membrane proton channel. F(1) has five subunits: alpha(3), beta(3), gamma(1), delta(1), epsilon(1). F(0) has three main subunits: a(1), b(2) and c(10-14). The alpha and beta chains form an alternating ring which encloses part of the gamma chain. F(1) is attached to F(0) by a central stalk formed by the gamma and epsilon chains, while a peripheral stalk is formed by the delta and b chains.</text>
</comment>
<comment type="subcellular location">
    <subcellularLocation>
        <location evidence="1">Cell inner membrane</location>
        <topology evidence="1">Peripheral membrane protein</topology>
    </subcellularLocation>
</comment>
<comment type="similarity">
    <text evidence="1">Belongs to the ATPase delta chain family.</text>
</comment>
<keyword id="KW-0066">ATP synthesis</keyword>
<keyword id="KW-0997">Cell inner membrane</keyword>
<keyword id="KW-1003">Cell membrane</keyword>
<keyword id="KW-0139">CF(1)</keyword>
<keyword id="KW-0375">Hydrogen ion transport</keyword>
<keyword id="KW-0406">Ion transport</keyword>
<keyword id="KW-0472">Membrane</keyword>
<keyword id="KW-0813">Transport</keyword>
<name>ATPD1_VIBC1</name>
<gene>
    <name evidence="1" type="primary">atpH1</name>
    <name type="ordered locus">VIBHAR_00424</name>
</gene>
<protein>
    <recommendedName>
        <fullName evidence="1">ATP synthase subunit delta 1</fullName>
    </recommendedName>
    <alternativeName>
        <fullName evidence="1">ATP synthase F(1) sector subunit delta 1</fullName>
    </alternativeName>
    <alternativeName>
        <fullName evidence="1">F-type ATPase subunit delta 1</fullName>
        <shortName evidence="1">F-ATPase subunit delta 1</shortName>
    </alternativeName>
</protein>
<dbReference type="EMBL" id="CP000789">
    <property type="protein sequence ID" value="ABU69439.1"/>
    <property type="molecule type" value="Genomic_DNA"/>
</dbReference>
<dbReference type="SMR" id="A7N0Y4"/>
<dbReference type="KEGG" id="vha:VIBHAR_00424"/>
<dbReference type="PATRIC" id="fig|338187.25.peg.2166"/>
<dbReference type="Proteomes" id="UP000008152">
    <property type="component" value="Chromosome I"/>
</dbReference>
<dbReference type="GO" id="GO:0005886">
    <property type="term" value="C:plasma membrane"/>
    <property type="evidence" value="ECO:0007669"/>
    <property type="project" value="UniProtKB-SubCell"/>
</dbReference>
<dbReference type="GO" id="GO:0045259">
    <property type="term" value="C:proton-transporting ATP synthase complex"/>
    <property type="evidence" value="ECO:0007669"/>
    <property type="project" value="UniProtKB-KW"/>
</dbReference>
<dbReference type="GO" id="GO:0046933">
    <property type="term" value="F:proton-transporting ATP synthase activity, rotational mechanism"/>
    <property type="evidence" value="ECO:0007669"/>
    <property type="project" value="UniProtKB-UniRule"/>
</dbReference>
<dbReference type="Gene3D" id="1.10.520.20">
    <property type="entry name" value="N-terminal domain of the delta subunit of the F1F0-ATP synthase"/>
    <property type="match status" value="1"/>
</dbReference>
<dbReference type="HAMAP" id="MF_01416">
    <property type="entry name" value="ATP_synth_delta_bact"/>
    <property type="match status" value="1"/>
</dbReference>
<dbReference type="InterPro" id="IPR026015">
    <property type="entry name" value="ATP_synth_OSCP/delta_N_sf"/>
</dbReference>
<dbReference type="InterPro" id="IPR020781">
    <property type="entry name" value="ATPase_OSCP/d_CS"/>
</dbReference>
<dbReference type="InterPro" id="IPR000711">
    <property type="entry name" value="ATPase_OSCP/dsu"/>
</dbReference>
<dbReference type="NCBIfam" id="TIGR01145">
    <property type="entry name" value="ATP_synt_delta"/>
    <property type="match status" value="1"/>
</dbReference>
<dbReference type="NCBIfam" id="NF004402">
    <property type="entry name" value="PRK05758.2-2"/>
    <property type="match status" value="1"/>
</dbReference>
<dbReference type="NCBIfam" id="NF004404">
    <property type="entry name" value="PRK05758.2-5"/>
    <property type="match status" value="1"/>
</dbReference>
<dbReference type="PANTHER" id="PTHR11910">
    <property type="entry name" value="ATP SYNTHASE DELTA CHAIN"/>
    <property type="match status" value="1"/>
</dbReference>
<dbReference type="Pfam" id="PF00213">
    <property type="entry name" value="OSCP"/>
    <property type="match status" value="1"/>
</dbReference>
<dbReference type="PRINTS" id="PR00125">
    <property type="entry name" value="ATPASEDELTA"/>
</dbReference>
<dbReference type="SUPFAM" id="SSF47928">
    <property type="entry name" value="N-terminal domain of the delta subunit of the F1F0-ATP synthase"/>
    <property type="match status" value="1"/>
</dbReference>
<dbReference type="PROSITE" id="PS00389">
    <property type="entry name" value="ATPASE_DELTA"/>
    <property type="match status" value="1"/>
</dbReference>
<evidence type="ECO:0000255" key="1">
    <source>
        <dbReference type="HAMAP-Rule" id="MF_01416"/>
    </source>
</evidence>
<proteinExistence type="inferred from homology"/>
<sequence>MSDMTTIARPYAKAAFDFAVDKDQLDQWGQMLSFATEVTKNEQMNELLKGSVSADKLAEIFVAVCGEQVDAHGQNLIKVMAENGRLTALPDVCEQFFLLKKEHEKEIDVEVISASELSDEQLANIGSKLEVRLERKVKLNCSVDETLLGGVIIRAGDLVIDNSARGRLNRLSDALQS</sequence>
<reference key="1">
    <citation type="submission" date="2007-08" db="EMBL/GenBank/DDBJ databases">
        <authorList>
            <consortium name="The Vibrio harveyi Genome Sequencing Project"/>
            <person name="Bassler B."/>
            <person name="Clifton S.W."/>
            <person name="Fulton L."/>
            <person name="Delehaunty K."/>
            <person name="Fronick C."/>
            <person name="Harrison M."/>
            <person name="Markivic C."/>
            <person name="Fulton R."/>
            <person name="Tin-Wollam A.-M."/>
            <person name="Shah N."/>
            <person name="Pepin K."/>
            <person name="Nash W."/>
            <person name="Thiruvilangam P."/>
            <person name="Bhonagiri V."/>
            <person name="Waters C."/>
            <person name="Tu K.C."/>
            <person name="Irgon J."/>
            <person name="Wilson R.K."/>
        </authorList>
    </citation>
    <scope>NUCLEOTIDE SEQUENCE [LARGE SCALE GENOMIC DNA]</scope>
    <source>
        <strain>ATCC BAA-1116 / BB120</strain>
    </source>
</reference>
<organism>
    <name type="scientific">Vibrio campbellii (strain ATCC BAA-1116)</name>
    <dbReference type="NCBI Taxonomy" id="2902295"/>
    <lineage>
        <taxon>Bacteria</taxon>
        <taxon>Pseudomonadati</taxon>
        <taxon>Pseudomonadota</taxon>
        <taxon>Gammaproteobacteria</taxon>
        <taxon>Vibrionales</taxon>
        <taxon>Vibrionaceae</taxon>
        <taxon>Vibrio</taxon>
    </lineage>
</organism>